<organism>
    <name type="scientific">Escherichia coli (strain UTI89 / UPEC)</name>
    <dbReference type="NCBI Taxonomy" id="364106"/>
    <lineage>
        <taxon>Bacteria</taxon>
        <taxon>Pseudomonadati</taxon>
        <taxon>Pseudomonadota</taxon>
        <taxon>Gammaproteobacteria</taxon>
        <taxon>Enterobacterales</taxon>
        <taxon>Enterobacteriaceae</taxon>
        <taxon>Escherichia</taxon>
    </lineage>
</organism>
<comment type="function">
    <text evidence="1">Necessary for the succinyl substitution of periplasmic glucans. Could catalyze the transfer of succinyl residues from the cytoplasmic side of the membrane to the nascent glucan backbones on the periplasmic side of the membrane.</text>
</comment>
<comment type="pathway">
    <text evidence="1">Glycan metabolism; osmoregulated periplasmic glucan (OPG) biosynthesis.</text>
</comment>
<comment type="subcellular location">
    <subcellularLocation>
        <location evidence="1">Cell membrane</location>
        <topology evidence="1">Multi-pass membrane protein</topology>
    </subcellularLocation>
</comment>
<comment type="similarity">
    <text evidence="1">Belongs to the acyltransferase 3 family. OpgC subfamily.</text>
</comment>
<protein>
    <recommendedName>
        <fullName evidence="1">Glucans biosynthesis protein C</fullName>
        <ecNumber evidence="1">2.1.-.-</ecNumber>
    </recommendedName>
</protein>
<sequence>MNPVPAQREYFLDSIRAWLMLLGIPFHISLIYSSHTWHVNSAEPSLWLTLFNDFIHSFRMQVFFVISGYFSYMLFLRYPLKKWWKVRVERVGIPMLTAIPLLTLPQFIMLQYVKGKAESWPGLSLYDKYNTLAWELISHLWFLLVLVVMTTLCVWIFKRIRNNLENSDKTNKKFSMVKLSVIFLCLGIGYAVIRRTIFIVYPPILSNGMFNFIVMQTLFYLPFFILGALAFIFPHLKALFTTPSRGCTFAAALAFVAYLLNQRYGSGDAWMYETESVITMVLGLWMVNVVFSFGHRLLNFQSARVTYFVNASLFIYLVHHPLTLFFGAYITPHITSNWLGFLCGLIFVVGIAIILYEIHLRIPLLKFLFSGKPVVKRENDKAPAR</sequence>
<dbReference type="EC" id="2.1.-.-" evidence="1"/>
<dbReference type="EMBL" id="CP000243">
    <property type="protein sequence ID" value="ABE06652.1"/>
    <property type="molecule type" value="Genomic_DNA"/>
</dbReference>
<dbReference type="RefSeq" id="WP_001070346.1">
    <property type="nucleotide sequence ID" value="NZ_CP064825.1"/>
</dbReference>
<dbReference type="KEGG" id="eci:UTI89_C1170"/>
<dbReference type="HOGENOM" id="CLU_036182_2_0_6"/>
<dbReference type="UniPathway" id="UPA00637"/>
<dbReference type="Proteomes" id="UP000001952">
    <property type="component" value="Chromosome"/>
</dbReference>
<dbReference type="GO" id="GO:0005886">
    <property type="term" value="C:plasma membrane"/>
    <property type="evidence" value="ECO:0007669"/>
    <property type="project" value="UniProtKB-SubCell"/>
</dbReference>
<dbReference type="GO" id="GO:0016747">
    <property type="term" value="F:acyltransferase activity, transferring groups other than amino-acyl groups"/>
    <property type="evidence" value="ECO:0007669"/>
    <property type="project" value="InterPro"/>
</dbReference>
<dbReference type="GO" id="GO:0016741">
    <property type="term" value="F:transferase activity, transferring one-carbon groups"/>
    <property type="evidence" value="ECO:0007669"/>
    <property type="project" value="UniProtKB-UniRule"/>
</dbReference>
<dbReference type="GO" id="GO:0009250">
    <property type="term" value="P:glucan biosynthetic process"/>
    <property type="evidence" value="ECO:0007669"/>
    <property type="project" value="UniProtKB-UniRule"/>
</dbReference>
<dbReference type="HAMAP" id="MF_01066">
    <property type="entry name" value="MdoC_OpgC"/>
    <property type="match status" value="1"/>
</dbReference>
<dbReference type="InterPro" id="IPR002656">
    <property type="entry name" value="Acyl_transf_3_dom"/>
</dbReference>
<dbReference type="InterPro" id="IPR050623">
    <property type="entry name" value="Glucan_succinyl_AcylTrfase"/>
</dbReference>
<dbReference type="InterPro" id="IPR023723">
    <property type="entry name" value="Glucans_biosynth_C"/>
</dbReference>
<dbReference type="NCBIfam" id="NF003014">
    <property type="entry name" value="PRK03854.1"/>
    <property type="match status" value="1"/>
</dbReference>
<dbReference type="PANTHER" id="PTHR36927">
    <property type="entry name" value="BLR4337 PROTEIN"/>
    <property type="match status" value="1"/>
</dbReference>
<dbReference type="PANTHER" id="PTHR36927:SF3">
    <property type="entry name" value="GLUCANS BIOSYNTHESIS PROTEIN C"/>
    <property type="match status" value="1"/>
</dbReference>
<dbReference type="Pfam" id="PF01757">
    <property type="entry name" value="Acyl_transf_3"/>
    <property type="match status" value="1"/>
</dbReference>
<reference key="1">
    <citation type="journal article" date="2006" name="Proc. Natl. Acad. Sci. U.S.A.">
        <title>Identification of genes subject to positive selection in uropathogenic strains of Escherichia coli: a comparative genomics approach.</title>
        <authorList>
            <person name="Chen S.L."/>
            <person name="Hung C.-S."/>
            <person name="Xu J."/>
            <person name="Reigstad C.S."/>
            <person name="Magrini V."/>
            <person name="Sabo A."/>
            <person name="Blasiar D."/>
            <person name="Bieri T."/>
            <person name="Meyer R.R."/>
            <person name="Ozersky P."/>
            <person name="Armstrong J.R."/>
            <person name="Fulton R.S."/>
            <person name="Latreille J.P."/>
            <person name="Spieth J."/>
            <person name="Hooton T.M."/>
            <person name="Mardis E.R."/>
            <person name="Hultgren S.J."/>
            <person name="Gordon J.I."/>
        </authorList>
    </citation>
    <scope>NUCLEOTIDE SEQUENCE [LARGE SCALE GENOMIC DNA]</scope>
    <source>
        <strain>UTI89 / UPEC</strain>
    </source>
</reference>
<accession>Q1RDB2</accession>
<name>OPGC_ECOUT</name>
<keyword id="KW-0012">Acyltransferase</keyword>
<keyword id="KW-1003">Cell membrane</keyword>
<keyword id="KW-0472">Membrane</keyword>
<keyword id="KW-0808">Transferase</keyword>
<keyword id="KW-0812">Transmembrane</keyword>
<keyword id="KW-1133">Transmembrane helix</keyword>
<proteinExistence type="inferred from homology"/>
<gene>
    <name evidence="1" type="primary">mdoC</name>
    <name evidence="1" type="synonym">opgC</name>
    <name type="ordered locus">UTI89_C1170</name>
</gene>
<evidence type="ECO:0000255" key="1">
    <source>
        <dbReference type="HAMAP-Rule" id="MF_01066"/>
    </source>
</evidence>
<feature type="chain" id="PRO_1000064514" description="Glucans biosynthesis protein C">
    <location>
        <begin position="1"/>
        <end position="385"/>
    </location>
</feature>
<feature type="transmembrane region" description="Helical" evidence="1">
    <location>
        <begin position="17"/>
        <end position="37"/>
    </location>
</feature>
<feature type="transmembrane region" description="Helical" evidence="1">
    <location>
        <begin position="60"/>
        <end position="80"/>
    </location>
</feature>
<feature type="transmembrane region" description="Helical" evidence="1">
    <location>
        <begin position="91"/>
        <end position="111"/>
    </location>
</feature>
<feature type="transmembrane region" description="Helical" evidence="1">
    <location>
        <begin position="137"/>
        <end position="157"/>
    </location>
</feature>
<feature type="transmembrane region" description="Helical" evidence="1">
    <location>
        <begin position="173"/>
        <end position="193"/>
    </location>
</feature>
<feature type="transmembrane region" description="Helical" evidence="1">
    <location>
        <begin position="212"/>
        <end position="232"/>
    </location>
</feature>
<feature type="transmembrane region" description="Helical" evidence="1">
    <location>
        <begin position="239"/>
        <end position="259"/>
    </location>
</feature>
<feature type="transmembrane region" description="Helical" evidence="1">
    <location>
        <begin position="274"/>
        <end position="294"/>
    </location>
</feature>
<feature type="transmembrane region" description="Helical" evidence="1">
    <location>
        <begin position="311"/>
        <end position="331"/>
    </location>
</feature>
<feature type="transmembrane region" description="Helical" evidence="1">
    <location>
        <begin position="338"/>
        <end position="358"/>
    </location>
</feature>